<dbReference type="EC" id="1.3.1.98" evidence="1"/>
<dbReference type="EMBL" id="CP000449">
    <property type="protein sequence ID" value="ABI66368.1"/>
    <property type="molecule type" value="Genomic_DNA"/>
</dbReference>
<dbReference type="RefSeq" id="WP_011644013.1">
    <property type="nucleotide sequence ID" value="NC_008347.1"/>
</dbReference>
<dbReference type="SMR" id="Q0AMW9"/>
<dbReference type="STRING" id="394221.Mmar10_2076"/>
<dbReference type="KEGG" id="mmr:Mmar10_2076"/>
<dbReference type="eggNOG" id="COG0812">
    <property type="taxonomic scope" value="Bacteria"/>
</dbReference>
<dbReference type="HOGENOM" id="CLU_035304_1_0_5"/>
<dbReference type="OrthoDB" id="9804753at2"/>
<dbReference type="UniPathway" id="UPA00219"/>
<dbReference type="Proteomes" id="UP000001964">
    <property type="component" value="Chromosome"/>
</dbReference>
<dbReference type="GO" id="GO:0005829">
    <property type="term" value="C:cytosol"/>
    <property type="evidence" value="ECO:0007669"/>
    <property type="project" value="TreeGrafter"/>
</dbReference>
<dbReference type="GO" id="GO:0071949">
    <property type="term" value="F:FAD binding"/>
    <property type="evidence" value="ECO:0007669"/>
    <property type="project" value="InterPro"/>
</dbReference>
<dbReference type="GO" id="GO:0008762">
    <property type="term" value="F:UDP-N-acetylmuramate dehydrogenase activity"/>
    <property type="evidence" value="ECO:0007669"/>
    <property type="project" value="UniProtKB-UniRule"/>
</dbReference>
<dbReference type="GO" id="GO:0051301">
    <property type="term" value="P:cell division"/>
    <property type="evidence" value="ECO:0007669"/>
    <property type="project" value="UniProtKB-KW"/>
</dbReference>
<dbReference type="GO" id="GO:0071555">
    <property type="term" value="P:cell wall organization"/>
    <property type="evidence" value="ECO:0007669"/>
    <property type="project" value="UniProtKB-KW"/>
</dbReference>
<dbReference type="GO" id="GO:0009252">
    <property type="term" value="P:peptidoglycan biosynthetic process"/>
    <property type="evidence" value="ECO:0007669"/>
    <property type="project" value="UniProtKB-UniRule"/>
</dbReference>
<dbReference type="GO" id="GO:0008360">
    <property type="term" value="P:regulation of cell shape"/>
    <property type="evidence" value="ECO:0007669"/>
    <property type="project" value="UniProtKB-KW"/>
</dbReference>
<dbReference type="Gene3D" id="3.30.465.10">
    <property type="match status" value="1"/>
</dbReference>
<dbReference type="Gene3D" id="3.90.78.10">
    <property type="entry name" value="UDP-N-acetylenolpyruvoylglucosamine reductase, C-terminal domain"/>
    <property type="match status" value="1"/>
</dbReference>
<dbReference type="Gene3D" id="3.30.43.10">
    <property type="entry name" value="Uridine Diphospho-n-acetylenolpyruvylglucosamine Reductase, domain 2"/>
    <property type="match status" value="1"/>
</dbReference>
<dbReference type="HAMAP" id="MF_00037">
    <property type="entry name" value="MurB"/>
    <property type="match status" value="1"/>
</dbReference>
<dbReference type="InterPro" id="IPR016166">
    <property type="entry name" value="FAD-bd_PCMH"/>
</dbReference>
<dbReference type="InterPro" id="IPR036318">
    <property type="entry name" value="FAD-bd_PCMH-like_sf"/>
</dbReference>
<dbReference type="InterPro" id="IPR016167">
    <property type="entry name" value="FAD-bd_PCMH_sub1"/>
</dbReference>
<dbReference type="InterPro" id="IPR016169">
    <property type="entry name" value="FAD-bd_PCMH_sub2"/>
</dbReference>
<dbReference type="InterPro" id="IPR003170">
    <property type="entry name" value="MurB"/>
</dbReference>
<dbReference type="InterPro" id="IPR011601">
    <property type="entry name" value="MurB_C"/>
</dbReference>
<dbReference type="InterPro" id="IPR036635">
    <property type="entry name" value="MurB_C_sf"/>
</dbReference>
<dbReference type="InterPro" id="IPR006094">
    <property type="entry name" value="Oxid_FAD_bind_N"/>
</dbReference>
<dbReference type="NCBIfam" id="TIGR00179">
    <property type="entry name" value="murB"/>
    <property type="match status" value="1"/>
</dbReference>
<dbReference type="NCBIfam" id="NF010480">
    <property type="entry name" value="PRK13905.1"/>
    <property type="match status" value="1"/>
</dbReference>
<dbReference type="PANTHER" id="PTHR21071">
    <property type="entry name" value="UDP-N-ACETYLENOLPYRUVOYLGLUCOSAMINE REDUCTASE"/>
    <property type="match status" value="1"/>
</dbReference>
<dbReference type="PANTHER" id="PTHR21071:SF4">
    <property type="entry name" value="UDP-N-ACETYLENOLPYRUVOYLGLUCOSAMINE REDUCTASE"/>
    <property type="match status" value="1"/>
</dbReference>
<dbReference type="Pfam" id="PF01565">
    <property type="entry name" value="FAD_binding_4"/>
    <property type="match status" value="1"/>
</dbReference>
<dbReference type="Pfam" id="PF02873">
    <property type="entry name" value="MurB_C"/>
    <property type="match status" value="1"/>
</dbReference>
<dbReference type="SUPFAM" id="SSF56176">
    <property type="entry name" value="FAD-binding/transporter-associated domain-like"/>
    <property type="match status" value="1"/>
</dbReference>
<dbReference type="SUPFAM" id="SSF56194">
    <property type="entry name" value="Uridine diphospho-N-Acetylenolpyruvylglucosamine reductase, MurB, C-terminal domain"/>
    <property type="match status" value="1"/>
</dbReference>
<dbReference type="PROSITE" id="PS51387">
    <property type="entry name" value="FAD_PCMH"/>
    <property type="match status" value="1"/>
</dbReference>
<keyword id="KW-0131">Cell cycle</keyword>
<keyword id="KW-0132">Cell division</keyword>
<keyword id="KW-0133">Cell shape</keyword>
<keyword id="KW-0961">Cell wall biogenesis/degradation</keyword>
<keyword id="KW-0963">Cytoplasm</keyword>
<keyword id="KW-0274">FAD</keyword>
<keyword id="KW-0285">Flavoprotein</keyword>
<keyword id="KW-0521">NADP</keyword>
<keyword id="KW-0560">Oxidoreductase</keyword>
<keyword id="KW-0573">Peptidoglycan synthesis</keyword>
<keyword id="KW-1185">Reference proteome</keyword>
<proteinExistence type="inferred from homology"/>
<organism>
    <name type="scientific">Maricaulis maris (strain MCS10)</name>
    <name type="common">Caulobacter maris</name>
    <dbReference type="NCBI Taxonomy" id="394221"/>
    <lineage>
        <taxon>Bacteria</taxon>
        <taxon>Pseudomonadati</taxon>
        <taxon>Pseudomonadota</taxon>
        <taxon>Alphaproteobacteria</taxon>
        <taxon>Maricaulales</taxon>
        <taxon>Maricaulaceae</taxon>
        <taxon>Maricaulis</taxon>
    </lineage>
</organism>
<name>MURB_MARMM</name>
<evidence type="ECO:0000255" key="1">
    <source>
        <dbReference type="HAMAP-Rule" id="MF_00037"/>
    </source>
</evidence>
<evidence type="ECO:0000256" key="2">
    <source>
        <dbReference type="SAM" id="MobiDB-lite"/>
    </source>
</evidence>
<sequence length="315" mass="33815">MTLLAQLPTVRGKYIEAAPLKGLTWLRVGGPADVLYLPADESDLCRFLAETPDEIPVTVLGAGSNTLVRDGGVPGVVIRLAGAFAKTEALDGYRLRAGAGALDKMVAKAAAKAGIGGLEYLVGVPGTIGGALRMNAGCYDQETSDVVVEVIALDRMGRRIIASPDELAYSYRHCEAPEDWIFTGAVFQGQADDPDAITKRMNAITARRETTQPIREKTSGSTFANPDPPGTPNQRKSWELIDSVGGRGYRVGGAHFSEQHCNFLINDGTASAADLEQVGEDVRARVRQQHDIELRWEVRRIGRVSGDQKQEGQAG</sequence>
<feature type="chain" id="PRO_0000332471" description="UDP-N-acetylenolpyruvoylglucosamine reductase">
    <location>
        <begin position="1"/>
        <end position="315"/>
    </location>
</feature>
<feature type="domain" description="FAD-binding PCMH-type" evidence="1">
    <location>
        <begin position="27"/>
        <end position="207"/>
    </location>
</feature>
<feature type="region of interest" description="Disordered" evidence="2">
    <location>
        <begin position="214"/>
        <end position="236"/>
    </location>
</feature>
<feature type="active site" evidence="1">
    <location>
        <position position="172"/>
    </location>
</feature>
<feature type="active site" description="Proton donor" evidence="1">
    <location>
        <position position="221"/>
    </location>
</feature>
<feature type="active site" evidence="1">
    <location>
        <position position="297"/>
    </location>
</feature>
<gene>
    <name evidence="1" type="primary">murB</name>
    <name type="ordered locus">Mmar10_2076</name>
</gene>
<comment type="function">
    <text evidence="1">Cell wall formation.</text>
</comment>
<comment type="catalytic activity">
    <reaction evidence="1">
        <text>UDP-N-acetyl-alpha-D-muramate + NADP(+) = UDP-N-acetyl-3-O-(1-carboxyvinyl)-alpha-D-glucosamine + NADPH + H(+)</text>
        <dbReference type="Rhea" id="RHEA:12248"/>
        <dbReference type="ChEBI" id="CHEBI:15378"/>
        <dbReference type="ChEBI" id="CHEBI:57783"/>
        <dbReference type="ChEBI" id="CHEBI:58349"/>
        <dbReference type="ChEBI" id="CHEBI:68483"/>
        <dbReference type="ChEBI" id="CHEBI:70757"/>
        <dbReference type="EC" id="1.3.1.98"/>
    </reaction>
</comment>
<comment type="cofactor">
    <cofactor evidence="1">
        <name>FAD</name>
        <dbReference type="ChEBI" id="CHEBI:57692"/>
    </cofactor>
</comment>
<comment type="pathway">
    <text evidence="1">Cell wall biogenesis; peptidoglycan biosynthesis.</text>
</comment>
<comment type="subcellular location">
    <subcellularLocation>
        <location evidence="1">Cytoplasm</location>
    </subcellularLocation>
</comment>
<comment type="similarity">
    <text evidence="1">Belongs to the MurB family.</text>
</comment>
<accession>Q0AMW9</accession>
<protein>
    <recommendedName>
        <fullName evidence="1">UDP-N-acetylenolpyruvoylglucosamine reductase</fullName>
        <ecNumber evidence="1">1.3.1.98</ecNumber>
    </recommendedName>
    <alternativeName>
        <fullName evidence="1">UDP-N-acetylmuramate dehydrogenase</fullName>
    </alternativeName>
</protein>
<reference key="1">
    <citation type="submission" date="2006-08" db="EMBL/GenBank/DDBJ databases">
        <title>Complete sequence of Maricaulis maris MCS10.</title>
        <authorList>
            <consortium name="US DOE Joint Genome Institute"/>
            <person name="Copeland A."/>
            <person name="Lucas S."/>
            <person name="Lapidus A."/>
            <person name="Barry K."/>
            <person name="Detter J.C."/>
            <person name="Glavina del Rio T."/>
            <person name="Hammon N."/>
            <person name="Israni S."/>
            <person name="Dalin E."/>
            <person name="Tice H."/>
            <person name="Pitluck S."/>
            <person name="Saunders E."/>
            <person name="Brettin T."/>
            <person name="Bruce D."/>
            <person name="Han C."/>
            <person name="Tapia R."/>
            <person name="Gilna P."/>
            <person name="Schmutz J."/>
            <person name="Larimer F."/>
            <person name="Land M."/>
            <person name="Hauser L."/>
            <person name="Kyrpides N."/>
            <person name="Mikhailova N."/>
            <person name="Viollier P."/>
            <person name="Stephens C."/>
            <person name="Richardson P."/>
        </authorList>
    </citation>
    <scope>NUCLEOTIDE SEQUENCE [LARGE SCALE GENOMIC DNA]</scope>
    <source>
        <strain>MCS10</strain>
    </source>
</reference>